<dbReference type="EMBL" id="AC132312">
    <property type="status" value="NOT_ANNOTATED_CDS"/>
    <property type="molecule type" value="Genomic_DNA"/>
</dbReference>
<dbReference type="EMBL" id="AC132354">
    <property type="status" value="NOT_ANNOTATED_CDS"/>
    <property type="molecule type" value="Genomic_DNA"/>
</dbReference>
<dbReference type="EMBL" id="AK013145">
    <property type="protein sequence ID" value="BAB28677.1"/>
    <property type="status" value="ALT_INIT"/>
    <property type="molecule type" value="mRNA"/>
</dbReference>
<dbReference type="EMBL" id="BC017546">
    <property type="protein sequence ID" value="AAH17546.1"/>
    <property type="status" value="ALT_INIT"/>
    <property type="molecule type" value="mRNA"/>
</dbReference>
<dbReference type="CCDS" id="CCDS25874.2">
    <molecule id="Q9CZ05-1"/>
</dbReference>
<dbReference type="RefSeq" id="NP_082415.2">
    <molecule id="Q9CZ05-1"/>
    <property type="nucleotide sequence ID" value="NM_028139.5"/>
</dbReference>
<dbReference type="FunCoup" id="Q9CZ05">
    <property type="interactions" value="43"/>
</dbReference>
<dbReference type="IntAct" id="Q9CZ05">
    <property type="interactions" value="2"/>
</dbReference>
<dbReference type="MINT" id="Q9CZ05"/>
<dbReference type="iPTMnet" id="Q9CZ05"/>
<dbReference type="PhosphoSitePlus" id="Q9CZ05"/>
<dbReference type="ProteomicsDB" id="265171">
    <molecule id="Q9CZ05-1"/>
</dbReference>
<dbReference type="ProteomicsDB" id="265172">
    <molecule id="Q9CZ05-2"/>
</dbReference>
<dbReference type="Antibodypedia" id="17103">
    <property type="antibodies" value="233 antibodies from 23 providers"/>
</dbReference>
<dbReference type="DNASU" id="380753"/>
<dbReference type="Ensembl" id="ENSMUST00000077456.13">
    <molecule id="Q9CZ05-2"/>
    <property type="protein sequence ID" value="ENSMUSP00000076668.7"/>
    <property type="gene ID" value="ENSMUSG00000020564.18"/>
</dbReference>
<dbReference type="Ensembl" id="ENSMUST00000110824.9">
    <molecule id="Q9CZ05-1"/>
    <property type="protein sequence ID" value="ENSMUSP00000106448.3"/>
    <property type="gene ID" value="ENSMUSG00000020564.18"/>
</dbReference>
<dbReference type="GeneID" id="380753"/>
<dbReference type="KEGG" id="mmu:380753"/>
<dbReference type="UCSC" id="uc007nin.2">
    <molecule id="Q9CZ05-1"/>
    <property type="organism name" value="mouse"/>
</dbReference>
<dbReference type="UCSC" id="uc007nio.2">
    <molecule id="Q9CZ05-2"/>
    <property type="organism name" value="mouse"/>
</dbReference>
<dbReference type="AGR" id="MGI:3584458"/>
<dbReference type="CTD" id="222255"/>
<dbReference type="MGI" id="MGI:3584458">
    <property type="gene designation" value="Atxn7l1"/>
</dbReference>
<dbReference type="VEuPathDB" id="HostDB:ENSMUSG00000020564"/>
<dbReference type="GeneTree" id="ENSGT00940000158612"/>
<dbReference type="HOGENOM" id="CLU_148763_0_0_1"/>
<dbReference type="InParanoid" id="Q9CZ05"/>
<dbReference type="BioGRID-ORCS" id="380753">
    <property type="hits" value="4 hits in 43 CRISPR screens"/>
</dbReference>
<dbReference type="ChiTaRS" id="Atxn7l1">
    <property type="organism name" value="mouse"/>
</dbReference>
<dbReference type="PRO" id="PR:Q9CZ05"/>
<dbReference type="Proteomes" id="UP000000589">
    <property type="component" value="Chromosome 12"/>
</dbReference>
<dbReference type="RNAct" id="Q9CZ05">
    <property type="molecule type" value="protein"/>
</dbReference>
<dbReference type="Bgee" id="ENSMUSG00000020564">
    <property type="expression patterns" value="Expressed in granulocyte and 213 other cell types or tissues"/>
</dbReference>
<dbReference type="ExpressionAtlas" id="Q9CZ05">
    <property type="expression patterns" value="baseline and differential"/>
</dbReference>
<dbReference type="InterPro" id="IPR052237">
    <property type="entry name" value="Ataxin-7-like_regulator"/>
</dbReference>
<dbReference type="PANTHER" id="PTHR15117">
    <property type="entry name" value="ATAXIN 7 RELATED"/>
    <property type="match status" value="1"/>
</dbReference>
<dbReference type="PANTHER" id="PTHR15117:SF9">
    <property type="entry name" value="ATAXIN-7-LIKE PROTEIN 1"/>
    <property type="match status" value="1"/>
</dbReference>
<evidence type="ECO:0000256" key="1">
    <source>
        <dbReference type="SAM" id="MobiDB-lite"/>
    </source>
</evidence>
<evidence type="ECO:0000303" key="2">
    <source>
    </source>
</evidence>
<evidence type="ECO:0000305" key="3"/>
<organism>
    <name type="scientific">Mus musculus</name>
    <name type="common">Mouse</name>
    <dbReference type="NCBI Taxonomy" id="10090"/>
    <lineage>
        <taxon>Eukaryota</taxon>
        <taxon>Metazoa</taxon>
        <taxon>Chordata</taxon>
        <taxon>Craniata</taxon>
        <taxon>Vertebrata</taxon>
        <taxon>Euteleostomi</taxon>
        <taxon>Mammalia</taxon>
        <taxon>Eutheria</taxon>
        <taxon>Euarchontoglires</taxon>
        <taxon>Glires</taxon>
        <taxon>Rodentia</taxon>
        <taxon>Myomorpha</taxon>
        <taxon>Muroidea</taxon>
        <taxon>Muridae</taxon>
        <taxon>Murinae</taxon>
        <taxon>Mus</taxon>
        <taxon>Mus</taxon>
    </lineage>
</organism>
<accession>Q9CZ05</accession>
<accession>Q8VD60</accession>
<proteinExistence type="evidence at transcript level"/>
<name>AT7L1_MOUSE</name>
<reference key="1">
    <citation type="journal article" date="2009" name="PLoS Biol.">
        <title>Lineage-specific biology revealed by a finished genome assembly of the mouse.</title>
        <authorList>
            <person name="Church D.M."/>
            <person name="Goodstadt L."/>
            <person name="Hillier L.W."/>
            <person name="Zody M.C."/>
            <person name="Goldstein S."/>
            <person name="She X."/>
            <person name="Bult C.J."/>
            <person name="Agarwala R."/>
            <person name="Cherry J.L."/>
            <person name="DiCuccio M."/>
            <person name="Hlavina W."/>
            <person name="Kapustin Y."/>
            <person name="Meric P."/>
            <person name="Maglott D."/>
            <person name="Birtle Z."/>
            <person name="Marques A.C."/>
            <person name="Graves T."/>
            <person name="Zhou S."/>
            <person name="Teague B."/>
            <person name="Potamousis K."/>
            <person name="Churas C."/>
            <person name="Place M."/>
            <person name="Herschleb J."/>
            <person name="Runnheim R."/>
            <person name="Forrest D."/>
            <person name="Amos-Landgraf J."/>
            <person name="Schwartz D.C."/>
            <person name="Cheng Z."/>
            <person name="Lindblad-Toh K."/>
            <person name="Eichler E.E."/>
            <person name="Ponting C.P."/>
        </authorList>
    </citation>
    <scope>NUCLEOTIDE SEQUENCE [LARGE SCALE GENOMIC DNA]</scope>
    <source>
        <strain>C57BL/6J</strain>
    </source>
</reference>
<reference key="2">
    <citation type="journal article" date="2005" name="Science">
        <title>The transcriptional landscape of the mammalian genome.</title>
        <authorList>
            <person name="Carninci P."/>
            <person name="Kasukawa T."/>
            <person name="Katayama S."/>
            <person name="Gough J."/>
            <person name="Frith M.C."/>
            <person name="Maeda N."/>
            <person name="Oyama R."/>
            <person name="Ravasi T."/>
            <person name="Lenhard B."/>
            <person name="Wells C."/>
            <person name="Kodzius R."/>
            <person name="Shimokawa K."/>
            <person name="Bajic V.B."/>
            <person name="Brenner S.E."/>
            <person name="Batalov S."/>
            <person name="Forrest A.R."/>
            <person name="Zavolan M."/>
            <person name="Davis M.J."/>
            <person name="Wilming L.G."/>
            <person name="Aidinis V."/>
            <person name="Allen J.E."/>
            <person name="Ambesi-Impiombato A."/>
            <person name="Apweiler R."/>
            <person name="Aturaliya R.N."/>
            <person name="Bailey T.L."/>
            <person name="Bansal M."/>
            <person name="Baxter L."/>
            <person name="Beisel K.W."/>
            <person name="Bersano T."/>
            <person name="Bono H."/>
            <person name="Chalk A.M."/>
            <person name="Chiu K.P."/>
            <person name="Choudhary V."/>
            <person name="Christoffels A."/>
            <person name="Clutterbuck D.R."/>
            <person name="Crowe M.L."/>
            <person name="Dalla E."/>
            <person name="Dalrymple B.P."/>
            <person name="de Bono B."/>
            <person name="Della Gatta G."/>
            <person name="di Bernardo D."/>
            <person name="Down T."/>
            <person name="Engstrom P."/>
            <person name="Fagiolini M."/>
            <person name="Faulkner G."/>
            <person name="Fletcher C.F."/>
            <person name="Fukushima T."/>
            <person name="Furuno M."/>
            <person name="Futaki S."/>
            <person name="Gariboldi M."/>
            <person name="Georgii-Hemming P."/>
            <person name="Gingeras T.R."/>
            <person name="Gojobori T."/>
            <person name="Green R.E."/>
            <person name="Gustincich S."/>
            <person name="Harbers M."/>
            <person name="Hayashi Y."/>
            <person name="Hensch T.K."/>
            <person name="Hirokawa N."/>
            <person name="Hill D."/>
            <person name="Huminiecki L."/>
            <person name="Iacono M."/>
            <person name="Ikeo K."/>
            <person name="Iwama A."/>
            <person name="Ishikawa T."/>
            <person name="Jakt M."/>
            <person name="Kanapin A."/>
            <person name="Katoh M."/>
            <person name="Kawasawa Y."/>
            <person name="Kelso J."/>
            <person name="Kitamura H."/>
            <person name="Kitano H."/>
            <person name="Kollias G."/>
            <person name="Krishnan S.P."/>
            <person name="Kruger A."/>
            <person name="Kummerfeld S.K."/>
            <person name="Kurochkin I.V."/>
            <person name="Lareau L.F."/>
            <person name="Lazarevic D."/>
            <person name="Lipovich L."/>
            <person name="Liu J."/>
            <person name="Liuni S."/>
            <person name="McWilliam S."/>
            <person name="Madan Babu M."/>
            <person name="Madera M."/>
            <person name="Marchionni L."/>
            <person name="Matsuda H."/>
            <person name="Matsuzawa S."/>
            <person name="Miki H."/>
            <person name="Mignone F."/>
            <person name="Miyake S."/>
            <person name="Morris K."/>
            <person name="Mottagui-Tabar S."/>
            <person name="Mulder N."/>
            <person name="Nakano N."/>
            <person name="Nakauchi H."/>
            <person name="Ng P."/>
            <person name="Nilsson R."/>
            <person name="Nishiguchi S."/>
            <person name="Nishikawa S."/>
            <person name="Nori F."/>
            <person name="Ohara O."/>
            <person name="Okazaki Y."/>
            <person name="Orlando V."/>
            <person name="Pang K.C."/>
            <person name="Pavan W.J."/>
            <person name="Pavesi G."/>
            <person name="Pesole G."/>
            <person name="Petrovsky N."/>
            <person name="Piazza S."/>
            <person name="Reed J."/>
            <person name="Reid J.F."/>
            <person name="Ring B.Z."/>
            <person name="Ringwald M."/>
            <person name="Rost B."/>
            <person name="Ruan Y."/>
            <person name="Salzberg S.L."/>
            <person name="Sandelin A."/>
            <person name="Schneider C."/>
            <person name="Schoenbach C."/>
            <person name="Sekiguchi K."/>
            <person name="Semple C.A."/>
            <person name="Seno S."/>
            <person name="Sessa L."/>
            <person name="Sheng Y."/>
            <person name="Shibata Y."/>
            <person name="Shimada H."/>
            <person name="Shimada K."/>
            <person name="Silva D."/>
            <person name="Sinclair B."/>
            <person name="Sperling S."/>
            <person name="Stupka E."/>
            <person name="Sugiura K."/>
            <person name="Sultana R."/>
            <person name="Takenaka Y."/>
            <person name="Taki K."/>
            <person name="Tammoja K."/>
            <person name="Tan S.L."/>
            <person name="Tang S."/>
            <person name="Taylor M.S."/>
            <person name="Tegner J."/>
            <person name="Teichmann S.A."/>
            <person name="Ueda H.R."/>
            <person name="van Nimwegen E."/>
            <person name="Verardo R."/>
            <person name="Wei C.L."/>
            <person name="Yagi K."/>
            <person name="Yamanishi H."/>
            <person name="Zabarovsky E."/>
            <person name="Zhu S."/>
            <person name="Zimmer A."/>
            <person name="Hide W."/>
            <person name="Bult C."/>
            <person name="Grimmond S.M."/>
            <person name="Teasdale R.D."/>
            <person name="Liu E.T."/>
            <person name="Brusic V."/>
            <person name="Quackenbush J."/>
            <person name="Wahlestedt C."/>
            <person name="Mattick J.S."/>
            <person name="Hume D.A."/>
            <person name="Kai C."/>
            <person name="Sasaki D."/>
            <person name="Tomaru Y."/>
            <person name="Fukuda S."/>
            <person name="Kanamori-Katayama M."/>
            <person name="Suzuki M."/>
            <person name="Aoki J."/>
            <person name="Arakawa T."/>
            <person name="Iida J."/>
            <person name="Imamura K."/>
            <person name="Itoh M."/>
            <person name="Kato T."/>
            <person name="Kawaji H."/>
            <person name="Kawagashira N."/>
            <person name="Kawashima T."/>
            <person name="Kojima M."/>
            <person name="Kondo S."/>
            <person name="Konno H."/>
            <person name="Nakano K."/>
            <person name="Ninomiya N."/>
            <person name="Nishio T."/>
            <person name="Okada M."/>
            <person name="Plessy C."/>
            <person name="Shibata K."/>
            <person name="Shiraki T."/>
            <person name="Suzuki S."/>
            <person name="Tagami M."/>
            <person name="Waki K."/>
            <person name="Watahiki A."/>
            <person name="Okamura-Oho Y."/>
            <person name="Suzuki H."/>
            <person name="Kawai J."/>
            <person name="Hayashizaki Y."/>
        </authorList>
    </citation>
    <scope>NUCLEOTIDE SEQUENCE [LARGE SCALE MRNA] OF 16-146 (ISOFORM 1)</scope>
    <source>
        <strain>C57BL/6J</strain>
        <tissue>Embryo</tissue>
    </source>
</reference>
<reference key="3">
    <citation type="journal article" date="2004" name="Genome Res.">
        <title>The status, quality, and expansion of the NIH full-length cDNA project: the Mammalian Gene Collection (MGC).</title>
        <authorList>
            <consortium name="The MGC Project Team"/>
        </authorList>
    </citation>
    <scope>NUCLEOTIDE SEQUENCE [LARGE SCALE MRNA] OF 28-146 (ISOFORM 2)</scope>
    <source>
        <strain>FVB/N</strain>
        <tissue>Salivary gland</tissue>
    </source>
</reference>
<protein>
    <recommendedName>
        <fullName>Ataxin-7-like protein 1</fullName>
    </recommendedName>
    <alternativeName>
        <fullName>Ataxin-7-like protein 4</fullName>
    </alternativeName>
</protein>
<keyword id="KW-0025">Alternative splicing</keyword>
<keyword id="KW-1185">Reference proteome</keyword>
<sequence length="146" mass="16186">MTSERSRIPCLSAAAAEGTGKKQQEGTAMATLHRKVPSPEAFLGKPWSSWIDAAKLHCSDNVDLEEAGKEGGKSREVMRLNKEDMHLFGHYPAHDDFYLVVCSACNQVVKPQVFQSHCGRKQDSKRNASISWSGAESRQALEQRQV</sequence>
<gene>
    <name type="primary">Atxn7l1</name>
    <name type="synonym">Atxn7l4</name>
</gene>
<comment type="alternative products">
    <event type="alternative splicing"/>
    <isoform>
        <id>Q9CZ05-1</id>
        <name>1</name>
        <sequence type="displayed"/>
    </isoform>
    <isoform>
        <id>Q9CZ05-2</id>
        <name>2</name>
        <sequence type="described" ref="VSP_021186"/>
    </isoform>
</comment>
<comment type="sequence caution" evidence="3">
    <conflict type="erroneous initiation">
        <sequence resource="EMBL-CDS" id="AAH17546"/>
    </conflict>
</comment>
<comment type="sequence caution" evidence="3">
    <conflict type="erroneous initiation">
        <sequence resource="EMBL-CDS" id="BAB28677"/>
    </conflict>
</comment>
<feature type="chain" id="PRO_0000254144" description="Ataxin-7-like protein 1">
    <location>
        <begin position="1"/>
        <end position="146"/>
    </location>
</feature>
<feature type="region of interest" description="Disordered" evidence="1">
    <location>
        <begin position="1"/>
        <end position="27"/>
    </location>
</feature>
<feature type="region of interest" description="Disordered" evidence="1">
    <location>
        <begin position="125"/>
        <end position="146"/>
    </location>
</feature>
<feature type="compositionally biased region" description="Polar residues" evidence="1">
    <location>
        <begin position="127"/>
        <end position="138"/>
    </location>
</feature>
<feature type="splice variant" id="VSP_021186" description="In isoform 2." evidence="2">
    <location>
        <begin position="62"/>
        <end position="84"/>
    </location>
</feature>